<reference key="1">
    <citation type="journal article" date="2001" name="Science">
        <title>Mechanisms of evolution in Rickettsia conorii and R. prowazekii.</title>
        <authorList>
            <person name="Ogata H."/>
            <person name="Audic S."/>
            <person name="Renesto-Audiffren P."/>
            <person name="Fournier P.-E."/>
            <person name="Barbe V."/>
            <person name="Samson D."/>
            <person name="Roux V."/>
            <person name="Cossart P."/>
            <person name="Weissenbach J."/>
            <person name="Claverie J.-M."/>
            <person name="Raoult D."/>
        </authorList>
    </citation>
    <scope>NUCLEOTIDE SEQUENCE [LARGE SCALE GENOMIC DNA]</scope>
    <source>
        <strain>ATCC VR-613 / Malish 7</strain>
    </source>
</reference>
<keyword id="KW-0963">Cytoplasm</keyword>
<keyword id="KW-0238">DNA-binding</keyword>
<sequence length="107" mass="11830">MVNFNQFLKQAQSMQKKMQEAQEQMANARYTGKAGGGLVEVIATGKGEVEKISIDESLLKAEEKEMLEDLIKVAFNDAQQKCDEDSQNSLSGALNGMRLPPGFKMPF</sequence>
<evidence type="ECO:0000255" key="1">
    <source>
        <dbReference type="HAMAP-Rule" id="MF_00274"/>
    </source>
</evidence>
<feature type="chain" id="PRO_0000170429" description="Nucleoid-associated protein RC1337">
    <location>
        <begin position="1"/>
        <end position="107"/>
    </location>
</feature>
<dbReference type="EMBL" id="AE006914">
    <property type="protein sequence ID" value="AAL03875.1"/>
    <property type="molecule type" value="Genomic_DNA"/>
</dbReference>
<dbReference type="PIR" id="A97867">
    <property type="entry name" value="A97867"/>
</dbReference>
<dbReference type="RefSeq" id="WP_010977891.1">
    <property type="nucleotide sequence ID" value="NC_003103.1"/>
</dbReference>
<dbReference type="SMR" id="Q92FZ0"/>
<dbReference type="GeneID" id="928485"/>
<dbReference type="KEGG" id="rco:RC1337"/>
<dbReference type="HOGENOM" id="CLU_140930_0_0_5"/>
<dbReference type="Proteomes" id="UP000000816">
    <property type="component" value="Chromosome"/>
</dbReference>
<dbReference type="GO" id="GO:0043590">
    <property type="term" value="C:bacterial nucleoid"/>
    <property type="evidence" value="ECO:0007669"/>
    <property type="project" value="UniProtKB-UniRule"/>
</dbReference>
<dbReference type="GO" id="GO:0005829">
    <property type="term" value="C:cytosol"/>
    <property type="evidence" value="ECO:0007669"/>
    <property type="project" value="TreeGrafter"/>
</dbReference>
<dbReference type="GO" id="GO:0003677">
    <property type="term" value="F:DNA binding"/>
    <property type="evidence" value="ECO:0007669"/>
    <property type="project" value="UniProtKB-UniRule"/>
</dbReference>
<dbReference type="Gene3D" id="3.30.1310.10">
    <property type="entry name" value="Nucleoid-associated protein YbaB-like domain"/>
    <property type="match status" value="1"/>
</dbReference>
<dbReference type="HAMAP" id="MF_00274">
    <property type="entry name" value="DNA_YbaB_EbfC"/>
    <property type="match status" value="1"/>
</dbReference>
<dbReference type="InterPro" id="IPR036894">
    <property type="entry name" value="YbaB-like_sf"/>
</dbReference>
<dbReference type="InterPro" id="IPR004401">
    <property type="entry name" value="YbaB/EbfC"/>
</dbReference>
<dbReference type="NCBIfam" id="TIGR00103">
    <property type="entry name" value="DNA_YbaB_EbfC"/>
    <property type="match status" value="1"/>
</dbReference>
<dbReference type="PANTHER" id="PTHR33449">
    <property type="entry name" value="NUCLEOID-ASSOCIATED PROTEIN YBAB"/>
    <property type="match status" value="1"/>
</dbReference>
<dbReference type="PANTHER" id="PTHR33449:SF1">
    <property type="entry name" value="NUCLEOID-ASSOCIATED PROTEIN YBAB"/>
    <property type="match status" value="1"/>
</dbReference>
<dbReference type="Pfam" id="PF02575">
    <property type="entry name" value="YbaB_DNA_bd"/>
    <property type="match status" value="1"/>
</dbReference>
<dbReference type="PIRSF" id="PIRSF004555">
    <property type="entry name" value="UCP004555"/>
    <property type="match status" value="1"/>
</dbReference>
<dbReference type="SUPFAM" id="SSF82607">
    <property type="entry name" value="YbaB-like"/>
    <property type="match status" value="1"/>
</dbReference>
<protein>
    <recommendedName>
        <fullName evidence="1">Nucleoid-associated protein RC1337</fullName>
    </recommendedName>
</protein>
<comment type="function">
    <text evidence="1">Binds to DNA and alters its conformation. May be involved in regulation of gene expression, nucleoid organization and DNA protection.</text>
</comment>
<comment type="subunit">
    <text evidence="1">Homodimer.</text>
</comment>
<comment type="subcellular location">
    <subcellularLocation>
        <location evidence="1">Cytoplasm</location>
        <location evidence="1">Nucleoid</location>
    </subcellularLocation>
</comment>
<comment type="similarity">
    <text evidence="1">Belongs to the YbaB/EbfC family.</text>
</comment>
<proteinExistence type="inferred from homology"/>
<name>Y1337_RICCN</name>
<organism>
    <name type="scientific">Rickettsia conorii (strain ATCC VR-613 / Malish 7)</name>
    <dbReference type="NCBI Taxonomy" id="272944"/>
    <lineage>
        <taxon>Bacteria</taxon>
        <taxon>Pseudomonadati</taxon>
        <taxon>Pseudomonadota</taxon>
        <taxon>Alphaproteobacteria</taxon>
        <taxon>Rickettsiales</taxon>
        <taxon>Rickettsiaceae</taxon>
        <taxon>Rickettsieae</taxon>
        <taxon>Rickettsia</taxon>
        <taxon>spotted fever group</taxon>
    </lineage>
</organism>
<gene>
    <name type="ordered locus">RC1337</name>
</gene>
<accession>Q92FZ0</accession>